<name>BDS4_ANEVI</name>
<dbReference type="EMBL" id="FK722457">
    <property type="status" value="NOT_ANNOTATED_CDS"/>
    <property type="molecule type" value="mRNA"/>
</dbReference>
<dbReference type="EMBL" id="FK734531">
    <property type="status" value="NOT_ANNOTATED_CDS"/>
    <property type="molecule type" value="mRNA"/>
</dbReference>
<dbReference type="EMBL" id="FK756277">
    <property type="status" value="NOT_ANNOTATED_CDS"/>
    <property type="molecule type" value="mRNA"/>
</dbReference>
<dbReference type="EMBL" id="FK728850">
    <property type="status" value="NOT_ANNOTATED_CDS"/>
    <property type="molecule type" value="mRNA"/>
</dbReference>
<dbReference type="EMBL" id="FK727733">
    <property type="status" value="NOT_ANNOTATED_CDS"/>
    <property type="molecule type" value="mRNA"/>
</dbReference>
<dbReference type="EMBL" id="FK721844">
    <property type="status" value="NOT_ANNOTATED_CDS"/>
    <property type="molecule type" value="mRNA"/>
</dbReference>
<dbReference type="SMR" id="P0DMX8"/>
<dbReference type="GO" id="GO:0005576">
    <property type="term" value="C:extracellular region"/>
    <property type="evidence" value="ECO:0007669"/>
    <property type="project" value="UniProtKB-SubCell"/>
</dbReference>
<dbReference type="GO" id="GO:0042151">
    <property type="term" value="C:nematocyst"/>
    <property type="evidence" value="ECO:0007669"/>
    <property type="project" value="UniProtKB-SubCell"/>
</dbReference>
<dbReference type="GO" id="GO:0008200">
    <property type="term" value="F:ion channel inhibitor activity"/>
    <property type="evidence" value="ECO:0007669"/>
    <property type="project" value="InterPro"/>
</dbReference>
<dbReference type="GO" id="GO:0015459">
    <property type="term" value="F:potassium channel regulator activity"/>
    <property type="evidence" value="ECO:0007669"/>
    <property type="project" value="UniProtKB-KW"/>
</dbReference>
<dbReference type="GO" id="GO:0090729">
    <property type="term" value="F:toxin activity"/>
    <property type="evidence" value="ECO:0007669"/>
    <property type="project" value="UniProtKB-KW"/>
</dbReference>
<dbReference type="GO" id="GO:0008217">
    <property type="term" value="P:regulation of blood pressure"/>
    <property type="evidence" value="ECO:0007669"/>
    <property type="project" value="UniProtKB-KW"/>
</dbReference>
<dbReference type="Gene3D" id="2.20.20.10">
    <property type="entry name" value="Anthopleurin-A"/>
    <property type="match status" value="1"/>
</dbReference>
<dbReference type="InterPro" id="IPR012414">
    <property type="entry name" value="BDS_K_chnl_tox"/>
</dbReference>
<dbReference type="InterPro" id="IPR023355">
    <property type="entry name" value="Myo_ane_neurotoxin_sf"/>
</dbReference>
<dbReference type="Pfam" id="PF07936">
    <property type="entry name" value="Defensin_4"/>
    <property type="match status" value="1"/>
</dbReference>
<dbReference type="SUPFAM" id="SSF57392">
    <property type="entry name" value="Defensin-like"/>
    <property type="match status" value="1"/>
</dbReference>
<sequence length="76" mass="8489">MNKALFLCLVVLCAAVVFAAEDLQKAKHVPFKRAAICFCPGKPDRGDLWIFRGTCPGGYGYTSNCYKWPNICCYPH</sequence>
<reference key="1">
    <citation type="journal article" date="2009" name="BMC Genomics">
        <title>Comprehensive EST analysis of the symbiotic sea anemone, Anemonia viridis.</title>
        <authorList>
            <person name="Sabourault C."/>
            <person name="Ganot P."/>
            <person name="Deleury E."/>
            <person name="Allemand D."/>
            <person name="Furla P."/>
        </authorList>
    </citation>
    <scope>NUCLEOTIDE SEQUENCE [MRNA]</scope>
</reference>
<reference key="2">
    <citation type="journal article" date="2011" name="BMC Genomics">
        <title>The mining of toxin-like polypeptides from EST database by single residue distribution analysis.</title>
        <authorList>
            <person name="Kozlov S."/>
            <person name="Grishin E."/>
        </authorList>
    </citation>
    <scope>NOMENCLATURE</scope>
</reference>
<reference key="3">
    <citation type="journal article" date="2012" name="Toxicon">
        <title>Development of a rational nomenclature for naming peptide and protein toxins from sea anemones.</title>
        <authorList>
            <person name="Oliveira J.S."/>
            <person name="Fuentes-Silva D."/>
            <person name="King G.F."/>
        </authorList>
    </citation>
    <scope>NOMENCLATURE</scope>
</reference>
<reference key="4">
    <citation type="journal article" date="2013" name="Mar. Drugs">
        <title>Evidence of accelerated evolution and ectodermal-specific expression of presumptive BDS toxin cDNAs from Anemonia viridis.</title>
        <authorList>
            <person name="Nicosia A."/>
            <person name="Maggio T."/>
            <person name="Mazzola S."/>
            <person name="Cuttitta A."/>
        </authorList>
    </citation>
    <scope>3D-STRUCTURE MODELING</scope>
    <scope>TISSUE SPECIFICITY</scope>
</reference>
<comment type="function">
    <text evidence="1">Blocks Kv3 voltage-gated potassium channels. Reduces blood pressure.</text>
</comment>
<comment type="subcellular location">
    <subcellularLocation>
        <location evidence="6">Secreted</location>
    </subcellularLocation>
    <subcellularLocation>
        <location evidence="6">Nematocyst</location>
    </subcellularLocation>
</comment>
<comment type="tissue specificity">
    <text evidence="3">Moderately expressed in the ectodermal tissue from the distal and proximal tentacles, body wall, and oral disk.</text>
</comment>
<comment type="similarity">
    <text evidence="6">Belongs to the sea anemone type 3 (BDS) potassium channel toxin family.</text>
</comment>
<comment type="caution">
    <text evidence="6">Opinions are divided on whether Anemonia viridis (Forsskal, 1775) and Anemonia sulcata (Pennant, 1777) are separate species.</text>
</comment>
<organism>
    <name type="scientific">Anemonia viridis</name>
    <name type="common">Snakelocks anemone</name>
    <dbReference type="NCBI Taxonomy" id="51769"/>
    <lineage>
        <taxon>Eukaryota</taxon>
        <taxon>Metazoa</taxon>
        <taxon>Cnidaria</taxon>
        <taxon>Anthozoa</taxon>
        <taxon>Hexacorallia</taxon>
        <taxon>Actiniaria</taxon>
        <taxon>Actiniidae</taxon>
        <taxon>Anemonia</taxon>
    </lineage>
</organism>
<accession>P0DMX8</accession>
<feature type="signal peptide" evidence="2">
    <location>
        <begin position="1"/>
        <end position="19"/>
    </location>
</feature>
<feature type="propeptide" id="PRO_0000433652" evidence="1">
    <location>
        <begin position="20"/>
        <end position="31"/>
    </location>
</feature>
<feature type="chain" id="PRO_0000433653" description="Kappa-actitoxin-Avd4d">
    <location>
        <begin position="34"/>
        <end position="76"/>
    </location>
</feature>
<feature type="disulfide bond" evidence="1">
    <location>
        <begin position="37"/>
        <end position="72"/>
    </location>
</feature>
<feature type="disulfide bond" evidence="1">
    <location>
        <begin position="39"/>
        <end position="65"/>
    </location>
</feature>
<feature type="disulfide bond" evidence="1">
    <location>
        <begin position="55"/>
        <end position="73"/>
    </location>
</feature>
<proteinExistence type="evidence at transcript level"/>
<protein>
    <recommendedName>
        <fullName evidence="5">Kappa-actitoxin-Avd4d</fullName>
        <shortName evidence="5">Kappa-AITX-Avd4d</shortName>
    </recommendedName>
    <alternativeName>
        <fullName>Antihypertensive protein BDS-4</fullName>
    </alternativeName>
    <alternativeName>
        <fullName evidence="4">Blood depressing substance 4</fullName>
        <shortName evidence="4">BDS-4</shortName>
    </alternativeName>
</protein>
<evidence type="ECO:0000250" key="1">
    <source>
        <dbReference type="UniProtKB" id="P11494"/>
    </source>
</evidence>
<evidence type="ECO:0000255" key="2"/>
<evidence type="ECO:0000269" key="3">
    <source>
    </source>
</evidence>
<evidence type="ECO:0000303" key="4">
    <source>
    </source>
</evidence>
<evidence type="ECO:0000303" key="5">
    <source>
    </source>
</evidence>
<evidence type="ECO:0000305" key="6"/>
<keyword id="KW-0165">Cleavage on pair of basic residues</keyword>
<keyword id="KW-1015">Disulfide bond</keyword>
<keyword id="KW-0382">Hypotensive agent</keyword>
<keyword id="KW-0872">Ion channel impairing toxin</keyword>
<keyword id="KW-0166">Nematocyst</keyword>
<keyword id="KW-0528">Neurotoxin</keyword>
<keyword id="KW-0632">Potassium channel impairing toxin</keyword>
<keyword id="KW-0964">Secreted</keyword>
<keyword id="KW-0732">Signal</keyword>
<keyword id="KW-0800">Toxin</keyword>
<keyword id="KW-1220">Voltage-gated potassium channel impairing toxin</keyword>